<accession>A5N258</accession>
<feature type="chain" id="PRO_1000077353" description="Threonine--tRNA ligase">
    <location>
        <begin position="1"/>
        <end position="637"/>
    </location>
</feature>
<feature type="domain" description="TGS" evidence="2">
    <location>
        <begin position="1"/>
        <end position="61"/>
    </location>
</feature>
<feature type="region of interest" description="Catalytic" evidence="1">
    <location>
        <begin position="242"/>
        <end position="532"/>
    </location>
</feature>
<feature type="binding site" evidence="1">
    <location>
        <position position="333"/>
    </location>
    <ligand>
        <name>Zn(2+)</name>
        <dbReference type="ChEBI" id="CHEBI:29105"/>
    </ligand>
</feature>
<feature type="binding site" evidence="1">
    <location>
        <position position="384"/>
    </location>
    <ligand>
        <name>Zn(2+)</name>
        <dbReference type="ChEBI" id="CHEBI:29105"/>
    </ligand>
</feature>
<feature type="binding site" evidence="1">
    <location>
        <position position="509"/>
    </location>
    <ligand>
        <name>Zn(2+)</name>
        <dbReference type="ChEBI" id="CHEBI:29105"/>
    </ligand>
</feature>
<gene>
    <name evidence="1" type="primary">thrS</name>
    <name type="ordered locus">CKL_3196</name>
</gene>
<evidence type="ECO:0000255" key="1">
    <source>
        <dbReference type="HAMAP-Rule" id="MF_00184"/>
    </source>
</evidence>
<evidence type="ECO:0000255" key="2">
    <source>
        <dbReference type="PROSITE-ProRule" id="PRU01228"/>
    </source>
</evidence>
<comment type="function">
    <text evidence="1">Catalyzes the attachment of threonine to tRNA(Thr) in a two-step reaction: L-threonine is first activated by ATP to form Thr-AMP and then transferred to the acceptor end of tRNA(Thr). Also edits incorrectly charged L-seryl-tRNA(Thr).</text>
</comment>
<comment type="catalytic activity">
    <reaction evidence="1">
        <text>tRNA(Thr) + L-threonine + ATP = L-threonyl-tRNA(Thr) + AMP + diphosphate + H(+)</text>
        <dbReference type="Rhea" id="RHEA:24624"/>
        <dbReference type="Rhea" id="RHEA-COMP:9670"/>
        <dbReference type="Rhea" id="RHEA-COMP:9704"/>
        <dbReference type="ChEBI" id="CHEBI:15378"/>
        <dbReference type="ChEBI" id="CHEBI:30616"/>
        <dbReference type="ChEBI" id="CHEBI:33019"/>
        <dbReference type="ChEBI" id="CHEBI:57926"/>
        <dbReference type="ChEBI" id="CHEBI:78442"/>
        <dbReference type="ChEBI" id="CHEBI:78534"/>
        <dbReference type="ChEBI" id="CHEBI:456215"/>
        <dbReference type="EC" id="6.1.1.3"/>
    </reaction>
</comment>
<comment type="cofactor">
    <cofactor evidence="1">
        <name>Zn(2+)</name>
        <dbReference type="ChEBI" id="CHEBI:29105"/>
    </cofactor>
    <text evidence="1">Binds 1 zinc ion per subunit.</text>
</comment>
<comment type="subunit">
    <text evidence="1">Homodimer.</text>
</comment>
<comment type="subcellular location">
    <subcellularLocation>
        <location evidence="1">Cytoplasm</location>
    </subcellularLocation>
</comment>
<comment type="similarity">
    <text evidence="1">Belongs to the class-II aminoacyl-tRNA synthetase family.</text>
</comment>
<dbReference type="EC" id="6.1.1.3" evidence="1"/>
<dbReference type="EMBL" id="CP000673">
    <property type="protein sequence ID" value="EDK35204.1"/>
    <property type="molecule type" value="Genomic_DNA"/>
</dbReference>
<dbReference type="RefSeq" id="WP_012103541.1">
    <property type="nucleotide sequence ID" value="NC_009706.1"/>
</dbReference>
<dbReference type="SMR" id="A5N258"/>
<dbReference type="STRING" id="431943.CKL_3196"/>
<dbReference type="KEGG" id="ckl:CKL_3196"/>
<dbReference type="eggNOG" id="COG0441">
    <property type="taxonomic scope" value="Bacteria"/>
</dbReference>
<dbReference type="HOGENOM" id="CLU_008554_0_1_9"/>
<dbReference type="Proteomes" id="UP000002411">
    <property type="component" value="Chromosome"/>
</dbReference>
<dbReference type="GO" id="GO:0005737">
    <property type="term" value="C:cytoplasm"/>
    <property type="evidence" value="ECO:0007669"/>
    <property type="project" value="UniProtKB-SubCell"/>
</dbReference>
<dbReference type="GO" id="GO:0005524">
    <property type="term" value="F:ATP binding"/>
    <property type="evidence" value="ECO:0007669"/>
    <property type="project" value="UniProtKB-UniRule"/>
</dbReference>
<dbReference type="GO" id="GO:0140096">
    <property type="term" value="F:catalytic activity, acting on a protein"/>
    <property type="evidence" value="ECO:0007669"/>
    <property type="project" value="UniProtKB-ARBA"/>
</dbReference>
<dbReference type="GO" id="GO:0046872">
    <property type="term" value="F:metal ion binding"/>
    <property type="evidence" value="ECO:0007669"/>
    <property type="project" value="UniProtKB-KW"/>
</dbReference>
<dbReference type="GO" id="GO:0004829">
    <property type="term" value="F:threonine-tRNA ligase activity"/>
    <property type="evidence" value="ECO:0007669"/>
    <property type="project" value="UniProtKB-UniRule"/>
</dbReference>
<dbReference type="GO" id="GO:0016740">
    <property type="term" value="F:transferase activity"/>
    <property type="evidence" value="ECO:0007669"/>
    <property type="project" value="UniProtKB-ARBA"/>
</dbReference>
<dbReference type="GO" id="GO:0000049">
    <property type="term" value="F:tRNA binding"/>
    <property type="evidence" value="ECO:0007669"/>
    <property type="project" value="UniProtKB-KW"/>
</dbReference>
<dbReference type="GO" id="GO:0006435">
    <property type="term" value="P:threonyl-tRNA aminoacylation"/>
    <property type="evidence" value="ECO:0007669"/>
    <property type="project" value="UniProtKB-UniRule"/>
</dbReference>
<dbReference type="CDD" id="cd01667">
    <property type="entry name" value="TGS_ThrRS"/>
    <property type="match status" value="1"/>
</dbReference>
<dbReference type="CDD" id="cd00860">
    <property type="entry name" value="ThrRS_anticodon"/>
    <property type="match status" value="1"/>
</dbReference>
<dbReference type="CDD" id="cd00771">
    <property type="entry name" value="ThrRS_core"/>
    <property type="match status" value="1"/>
</dbReference>
<dbReference type="FunFam" id="3.30.54.20:FF:000002">
    <property type="entry name" value="Threonine--tRNA ligase"/>
    <property type="match status" value="1"/>
</dbReference>
<dbReference type="FunFam" id="3.30.930.10:FF:000002">
    <property type="entry name" value="Threonine--tRNA ligase"/>
    <property type="match status" value="1"/>
</dbReference>
<dbReference type="FunFam" id="3.40.50.800:FF:000001">
    <property type="entry name" value="Threonine--tRNA ligase"/>
    <property type="match status" value="1"/>
</dbReference>
<dbReference type="FunFam" id="3.30.980.10:FF:000005">
    <property type="entry name" value="Threonyl-tRNA synthetase, mitochondrial"/>
    <property type="match status" value="1"/>
</dbReference>
<dbReference type="Gene3D" id="3.10.20.30">
    <property type="match status" value="1"/>
</dbReference>
<dbReference type="Gene3D" id="3.30.54.20">
    <property type="match status" value="1"/>
</dbReference>
<dbReference type="Gene3D" id="3.40.50.800">
    <property type="entry name" value="Anticodon-binding domain"/>
    <property type="match status" value="1"/>
</dbReference>
<dbReference type="Gene3D" id="3.30.930.10">
    <property type="entry name" value="Bira Bifunctional Protein, Domain 2"/>
    <property type="match status" value="1"/>
</dbReference>
<dbReference type="Gene3D" id="3.30.980.10">
    <property type="entry name" value="Threonyl-trna Synthetase, Chain A, domain 2"/>
    <property type="match status" value="1"/>
</dbReference>
<dbReference type="HAMAP" id="MF_00184">
    <property type="entry name" value="Thr_tRNA_synth"/>
    <property type="match status" value="1"/>
</dbReference>
<dbReference type="InterPro" id="IPR002314">
    <property type="entry name" value="aa-tRNA-synt_IIb"/>
</dbReference>
<dbReference type="InterPro" id="IPR006195">
    <property type="entry name" value="aa-tRNA-synth_II"/>
</dbReference>
<dbReference type="InterPro" id="IPR045864">
    <property type="entry name" value="aa-tRNA-synth_II/BPL/LPL"/>
</dbReference>
<dbReference type="InterPro" id="IPR004154">
    <property type="entry name" value="Anticodon-bd"/>
</dbReference>
<dbReference type="InterPro" id="IPR036621">
    <property type="entry name" value="Anticodon-bd_dom_sf"/>
</dbReference>
<dbReference type="InterPro" id="IPR012675">
    <property type="entry name" value="Beta-grasp_dom_sf"/>
</dbReference>
<dbReference type="InterPro" id="IPR004095">
    <property type="entry name" value="TGS"/>
</dbReference>
<dbReference type="InterPro" id="IPR012676">
    <property type="entry name" value="TGS-like"/>
</dbReference>
<dbReference type="InterPro" id="IPR002320">
    <property type="entry name" value="Thr-tRNA-ligase_IIa"/>
</dbReference>
<dbReference type="InterPro" id="IPR018163">
    <property type="entry name" value="Thr/Ala-tRNA-synth_IIc_edit"/>
</dbReference>
<dbReference type="InterPro" id="IPR047246">
    <property type="entry name" value="ThrRS_anticodon"/>
</dbReference>
<dbReference type="InterPro" id="IPR033728">
    <property type="entry name" value="ThrRS_core"/>
</dbReference>
<dbReference type="InterPro" id="IPR012947">
    <property type="entry name" value="tRNA_SAD"/>
</dbReference>
<dbReference type="NCBIfam" id="TIGR00418">
    <property type="entry name" value="thrS"/>
    <property type="match status" value="1"/>
</dbReference>
<dbReference type="PANTHER" id="PTHR11451:SF44">
    <property type="entry name" value="THREONINE--TRNA LIGASE, CHLOROPLASTIC_MITOCHONDRIAL 2"/>
    <property type="match status" value="1"/>
</dbReference>
<dbReference type="PANTHER" id="PTHR11451">
    <property type="entry name" value="THREONINE-TRNA LIGASE"/>
    <property type="match status" value="1"/>
</dbReference>
<dbReference type="Pfam" id="PF03129">
    <property type="entry name" value="HGTP_anticodon"/>
    <property type="match status" value="1"/>
</dbReference>
<dbReference type="Pfam" id="PF02824">
    <property type="entry name" value="TGS"/>
    <property type="match status" value="1"/>
</dbReference>
<dbReference type="Pfam" id="PF00587">
    <property type="entry name" value="tRNA-synt_2b"/>
    <property type="match status" value="1"/>
</dbReference>
<dbReference type="Pfam" id="PF07973">
    <property type="entry name" value="tRNA_SAD"/>
    <property type="match status" value="1"/>
</dbReference>
<dbReference type="PRINTS" id="PR01047">
    <property type="entry name" value="TRNASYNTHTHR"/>
</dbReference>
<dbReference type="SMART" id="SM00863">
    <property type="entry name" value="tRNA_SAD"/>
    <property type="match status" value="1"/>
</dbReference>
<dbReference type="SUPFAM" id="SSF52954">
    <property type="entry name" value="Class II aaRS ABD-related"/>
    <property type="match status" value="1"/>
</dbReference>
<dbReference type="SUPFAM" id="SSF55681">
    <property type="entry name" value="Class II aaRS and biotin synthetases"/>
    <property type="match status" value="1"/>
</dbReference>
<dbReference type="SUPFAM" id="SSF81271">
    <property type="entry name" value="TGS-like"/>
    <property type="match status" value="1"/>
</dbReference>
<dbReference type="SUPFAM" id="SSF55186">
    <property type="entry name" value="ThrRS/AlaRS common domain"/>
    <property type="match status" value="1"/>
</dbReference>
<dbReference type="PROSITE" id="PS50862">
    <property type="entry name" value="AA_TRNA_LIGASE_II"/>
    <property type="match status" value="1"/>
</dbReference>
<dbReference type="PROSITE" id="PS51880">
    <property type="entry name" value="TGS"/>
    <property type="match status" value="1"/>
</dbReference>
<proteinExistence type="inferred from homology"/>
<organism>
    <name type="scientific">Clostridium kluyveri (strain ATCC 8527 / DSM 555 / NBRC 12016 / NCIMB 10680 / K1)</name>
    <dbReference type="NCBI Taxonomy" id="431943"/>
    <lineage>
        <taxon>Bacteria</taxon>
        <taxon>Bacillati</taxon>
        <taxon>Bacillota</taxon>
        <taxon>Clostridia</taxon>
        <taxon>Eubacteriales</taxon>
        <taxon>Clostridiaceae</taxon>
        <taxon>Clostridium</taxon>
    </lineage>
</organism>
<sequence length="637" mass="73463">MIKISLKNGKEIEVEKGLKVIDIAAKLSISLSKKALGAVVDGKVVELNYKINKDCKVEILTFEDEEGKKILRHTASHILAQAIKRLYPEVKLAIGPAIDSGFYYDVDAEFSFTPELLEKIEGKMNEIIKENIKLERFELPREEAIKFMEEKNEPYKVELIKDLPEDSIISFYKQGDFVDLCAGPHVPSTGRAKAVKLLSIAGAYWRGNENNKMLQRIYGTVFEKKSDLQDYLKLMEEAKKRDHRKLGKELDLFSIHEEGPGFPFFHPKGMVIRNTLQNFWREMHYKADYSEIMTPIILNEELWHRSGHWDHYKENMYFTKIDDGNYAIKPMNCPGSILVYKNDIRSYRDLPKRYAEMGVVHRHEKSGALHGLMRVRCFTQDDAHIFVTKDDIADEIIKVIDLIDNFYKIFGFEYFVELSTRPEDSMGSDEDWEAATEGLKNALKMVGLDYKINEGDGAFYGPKIDFHLKDCIGRTWQCGTVQLDFQMPEKFDLNYIGADGEKHRPVMIHRVVFGSIERFIGILIEHYAGAFPAWIAPVQVQVMNITDAQADYVAEVAKTLKENNIRVECDIRNEKIGYKIREAQMHKVPYMIILGDKEMKDKNISVRSRKEGDIGAMSLEDFILKLKEEIDKKISHV</sequence>
<protein>
    <recommendedName>
        <fullName evidence="1">Threonine--tRNA ligase</fullName>
        <ecNumber evidence="1">6.1.1.3</ecNumber>
    </recommendedName>
    <alternativeName>
        <fullName evidence="1">Threonyl-tRNA synthetase</fullName>
        <shortName evidence="1">ThrRS</shortName>
    </alternativeName>
</protein>
<keyword id="KW-0030">Aminoacyl-tRNA synthetase</keyword>
<keyword id="KW-0067">ATP-binding</keyword>
<keyword id="KW-0963">Cytoplasm</keyword>
<keyword id="KW-0436">Ligase</keyword>
<keyword id="KW-0479">Metal-binding</keyword>
<keyword id="KW-0547">Nucleotide-binding</keyword>
<keyword id="KW-0648">Protein biosynthesis</keyword>
<keyword id="KW-1185">Reference proteome</keyword>
<keyword id="KW-0694">RNA-binding</keyword>
<keyword id="KW-0820">tRNA-binding</keyword>
<keyword id="KW-0862">Zinc</keyword>
<reference key="1">
    <citation type="journal article" date="2008" name="Proc. Natl. Acad. Sci. U.S.A.">
        <title>The genome of Clostridium kluyveri, a strict anaerobe with unique metabolic features.</title>
        <authorList>
            <person name="Seedorf H."/>
            <person name="Fricke W.F."/>
            <person name="Veith B."/>
            <person name="Brueggemann H."/>
            <person name="Liesegang H."/>
            <person name="Strittmatter A."/>
            <person name="Miethke M."/>
            <person name="Buckel W."/>
            <person name="Hinderberger J."/>
            <person name="Li F."/>
            <person name="Hagemeier C."/>
            <person name="Thauer R.K."/>
            <person name="Gottschalk G."/>
        </authorList>
    </citation>
    <scope>NUCLEOTIDE SEQUENCE [LARGE SCALE GENOMIC DNA]</scope>
    <source>
        <strain>ATCC 8527 / DSM 555 / NBRC 12016 / NCIMB 10680 / K1</strain>
    </source>
</reference>
<name>SYT_CLOK5</name>